<keyword id="KW-0025">Alternative splicing</keyword>
<keyword id="KW-1003">Cell membrane</keyword>
<keyword id="KW-0966">Cell projection</keyword>
<keyword id="KW-0175">Coiled coil</keyword>
<keyword id="KW-0963">Cytoplasm</keyword>
<keyword id="KW-0206">Cytoskeleton</keyword>
<keyword id="KW-0472">Membrane</keyword>
<keyword id="KW-0493">Microtubule</keyword>
<keyword id="KW-1185">Reference proteome</keyword>
<name>PTRN1_CAEEL</name>
<accession>U4PAZ9</accession>
<accession>Q966J8</accession>
<accession>U4PLF6</accession>
<accession>W6SB68</accession>
<sequence>MDFPLPALLAIEDYDENEGKLAASIRWLISRVYEEKRDMPDKLRDGVQRDENGHFQIDEAVVGALCNGSLYAQAAAKIFKESALVTKGHGAVLAVLTDYGIDVLHDGNELVEEAQLVASAPFNMSAHLAIIDALMMAHLRDVIPVSRVVEAVSRHTAVEPSEKPIDSVDALLFWINKICLLVRDDVEREDSNTNIPEMEDLYEDISDGQCLCALLHWYRPHEMPVADISFNDSATTRDCQYNLMLLQLFCRHHLAVDPFHFEIEDLLYLRDSLQMNVNAFLADLFVQFEPPVTPEPVETPRIGPSPRRFVPASAIPDLRAANAAARSSMHNRNRPRMYNPPPAVSHSQGPSRSVSRMSQDSLFYSRPASIALQRRSMDQDSVTDFQTIRQGFENQAGTAQLNRYDGSVTASVRLAMEEKRRKHDQQMAQMSFSSANETERLEKSKAAFFALRKNDNDQTSKGKEEWYDHFEAKLRALELRVGLEEGEDGTQSARLNRASSQPSVVQAGQTYPANYMTLPMNAAAQMTQSYIQHPQTPHDYYMQQQMQQQQQQQAQAQSNYASPSQLRNSLSNGMINHAGYIVQSMYPGDYQQQQQQMQMQQGQMPVQPVGAYTPEGYFIPHHMQPIPVQQGYQQMPQPGMGFNGMPATSQPGFNMEGSPAQMGYIQTANKPLDMEMPMQQQPPQQPPQQMLPPNQNAFHLHSKSDDATQVQADPPLEINRNLTNWGMTYKQEMPARSIPSRRTWQNETFIKNELDLVNSKESVPHITDETTTQPEEAARRFPDLMLDNHSENLAPGRGFSRQNDRDDLSTGRKSDDSPTDTPGRTFDDDEGSGENMEKIANERRIAKKAALIAKTMKRKEEIETKVDLAEQRNAERRQVENEKKELALRKKVEKEQQRQKILDEYKRKKLEKELGAELSARSTGRGHSQPPFIRTKSQMSEVTESSRQNTPRMRGQSSVEQRVSVSSLAEPTHKLYAKTVTKSNRGLINNALQFSVFPGAVNNATRQATITQMASSSSKHFLILFRDQKCQYRGLYTWDEISDTAVKISGQGPPKCTEAMMNSMFKYDSGAKNFTNIATKHLSATIDGFAILDQYWQKARIPHSGTPAHKNN</sequence>
<evidence type="ECO:0000255" key="1"/>
<evidence type="ECO:0000255" key="2">
    <source>
        <dbReference type="PROSITE-ProRule" id="PRU00044"/>
    </source>
</evidence>
<evidence type="ECO:0000255" key="3">
    <source>
        <dbReference type="PROSITE-ProRule" id="PRU00841"/>
    </source>
</evidence>
<evidence type="ECO:0000256" key="4">
    <source>
        <dbReference type="SAM" id="MobiDB-lite"/>
    </source>
</evidence>
<evidence type="ECO:0000269" key="5">
    <source>
    </source>
</evidence>
<evidence type="ECO:0000269" key="6">
    <source>
    </source>
</evidence>
<evidence type="ECO:0000269" key="7">
    <source>
    </source>
</evidence>
<evidence type="ECO:0000269" key="8">
    <source>
    </source>
</evidence>
<evidence type="ECO:0000269" key="9">
    <source>
    </source>
</evidence>
<evidence type="ECO:0000305" key="10"/>
<evidence type="ECO:0000312" key="11">
    <source>
        <dbReference type="EMBL" id="CDH92934.1"/>
    </source>
</evidence>
<evidence type="ECO:0000312" key="12">
    <source>
        <dbReference type="Proteomes" id="UP000001940"/>
    </source>
</evidence>
<evidence type="ECO:0000312" key="13">
    <source>
        <dbReference type="WormBase" id="F35B3.5a"/>
    </source>
</evidence>
<evidence type="ECO:0000312" key="14">
    <source>
        <dbReference type="WormBase" id="F35B3.5c"/>
    </source>
</evidence>
<evidence type="ECO:0000312" key="15">
    <source>
        <dbReference type="WormBase" id="F35B3.5d"/>
    </source>
</evidence>
<evidence type="ECO:0000312" key="16">
    <source>
        <dbReference type="WormBase" id="F35B3.5e"/>
    </source>
</evidence>
<protein>
    <recommendedName>
        <fullName evidence="14">Patronin (microtubule-binding protein) homolog</fullName>
    </recommendedName>
</protein>
<proteinExistence type="evidence at protein level"/>
<reference evidence="12" key="1">
    <citation type="journal article" date="1998" name="Science">
        <title>Genome sequence of the nematode C. elegans: a platform for investigating biology.</title>
        <authorList>
            <consortium name="The C. elegans sequencing consortium"/>
        </authorList>
    </citation>
    <scope>NUCLEOTIDE SEQUENCE [LARGE SCALE GENOMIC DNA]</scope>
    <source>
        <strain evidence="11 12">Bristol N2</strain>
    </source>
</reference>
<reference evidence="10" key="2">
    <citation type="journal article" date="2014" name="Cell Rep.">
        <title>The microtubule minus-end-binding protein patronin/PTRN-1 is required for axon regeneration in C. elegans.</title>
        <authorList>
            <person name="Chuang M."/>
            <person name="Goncharov A."/>
            <person name="Wang S."/>
            <person name="Oegema K."/>
            <person name="Jin Y."/>
            <person name="Chisholm A.D."/>
        </authorList>
    </citation>
    <scope>FUNCTION</scope>
    <scope>SUBCELLULAR LOCATION</scope>
    <scope>DISRUPTION PHENOTYPE</scope>
</reference>
<reference evidence="10" key="3">
    <citation type="journal article" date="2014" name="Elife">
        <title>PTRN-1, a microtubule minus end-binding CAMSAP homolog, promotes microtubule function in Caenorhabditis elegans neurons.</title>
        <authorList>
            <person name="Richardson C.E."/>
            <person name="Spilker K.A."/>
            <person name="Cueva J.G."/>
            <person name="Perrino J."/>
            <person name="Goodman M.B."/>
            <person name="Shen K."/>
        </authorList>
    </citation>
    <scope>FUNCTION</scope>
    <scope>SUBCELLULAR LOCATION</scope>
    <scope>TISSUE SPECIFICITY</scope>
    <scope>DEVELOPMENTAL STAGE</scope>
    <scope>DISRUPTION PHENOTYPE</scope>
</reference>
<reference evidence="10" key="4">
    <citation type="journal article" date="2014" name="Elife">
        <title>The Caenorhabditis elegans microtubule minus-end binding homolog PTRN-1 stabilizes synapses and neurites.</title>
        <authorList>
            <person name="Marcette J.D."/>
            <person name="Chen J.J."/>
            <person name="Nonet M.L."/>
        </authorList>
    </citation>
    <scope>FUNCTION</scope>
    <scope>SUBCELLULAR LOCATION</scope>
    <scope>TISSUE SPECIFICITY</scope>
    <scope>DISRUPTION PHENOTYPE</scope>
</reference>
<reference evidence="10" key="5">
    <citation type="journal article" date="2015" name="Elife">
        <title>NOCA-1 Functions with gamma-tubulin and in parallel to Patronin to assemble non-centrosomal microtubule arrays in C. elegans.</title>
        <authorList>
            <person name="Wang S."/>
            <person name="Wu D."/>
            <person name="Quintin S."/>
            <person name="Green R.A."/>
            <person name="Cheerambathur D.K."/>
            <person name="Ochoa S.D."/>
            <person name="Desai A."/>
            <person name="Oegema K."/>
        </authorList>
    </citation>
    <scope>FUNCTION</scope>
    <scope>TISSUE SPECIFICITY</scope>
    <scope>DEVELOPMENTAL STAGE</scope>
    <scope>DISRUPTION PHENOTYPE</scope>
</reference>
<reference key="6">
    <citation type="journal article" date="2016" name="Elife">
        <title>DAPK interacts with Patronin and the microtubule cytoskeleton in epidermal development and wound repair.</title>
        <authorList>
            <person name="Chuang M."/>
            <person name="Hsiao T.I."/>
            <person name="Tong A."/>
            <person name="Xu S."/>
            <person name="Chisholm A.D."/>
        </authorList>
    </citation>
    <scope>FUNCTION</scope>
    <scope>INTERACTION WITH DAPK-1</scope>
    <scope>SUBCELLULAR LOCATION</scope>
    <scope>DOMAIN</scope>
    <scope>DISRUPTION PHENOTYPE</scope>
</reference>
<dbReference type="EMBL" id="BX284606">
    <property type="protein sequence ID" value="CDH92934.1"/>
    <property type="molecule type" value="Genomic_DNA"/>
</dbReference>
<dbReference type="EMBL" id="BX284606">
    <property type="protein sequence ID" value="CCD66253.2"/>
    <property type="molecule type" value="Genomic_DNA"/>
</dbReference>
<dbReference type="EMBL" id="BX284606">
    <property type="protein sequence ID" value="CDH92935.1"/>
    <property type="molecule type" value="Genomic_DNA"/>
</dbReference>
<dbReference type="EMBL" id="BX284606">
    <property type="protein sequence ID" value="CDM63458.1"/>
    <property type="molecule type" value="Genomic_DNA"/>
</dbReference>
<dbReference type="RefSeq" id="NP_001294829.1">
    <molecule id="U4PAZ9-4"/>
    <property type="nucleotide sequence ID" value="NM_001307900.4"/>
</dbReference>
<dbReference type="RefSeq" id="NP_001294846.1">
    <molecule id="U4PAZ9-1"/>
    <property type="nucleotide sequence ID" value="NM_001307917.4"/>
</dbReference>
<dbReference type="RefSeq" id="NP_001294847.1">
    <molecule id="U4PAZ9-3"/>
    <property type="nucleotide sequence ID" value="NM_001307918.4"/>
</dbReference>
<dbReference type="RefSeq" id="NP_510751.4">
    <molecule id="U4PAZ9-2"/>
    <property type="nucleotide sequence ID" value="NM_078350.6"/>
</dbReference>
<dbReference type="FunCoup" id="U4PAZ9">
    <property type="interactions" value="1705"/>
</dbReference>
<dbReference type="IntAct" id="U4PAZ9">
    <property type="interactions" value="1"/>
</dbReference>
<dbReference type="STRING" id="6239.F35B3.5c.1"/>
<dbReference type="PaxDb" id="6239-F35B3.5c"/>
<dbReference type="EnsemblMetazoa" id="F35B3.5a.1">
    <molecule id="U4PAZ9-2"/>
    <property type="protein sequence ID" value="F35B3.5a.1"/>
    <property type="gene ID" value="WBGene00004121"/>
</dbReference>
<dbReference type="EnsemblMetazoa" id="F35B3.5c.1">
    <molecule id="U4PAZ9-1"/>
    <property type="protein sequence ID" value="F35B3.5c.1"/>
    <property type="gene ID" value="WBGene00004121"/>
</dbReference>
<dbReference type="EnsemblMetazoa" id="F35B3.5d.1">
    <molecule id="U4PAZ9-3"/>
    <property type="protein sequence ID" value="F35B3.5d.1"/>
    <property type="gene ID" value="WBGene00004121"/>
</dbReference>
<dbReference type="EnsemblMetazoa" id="F35B3.5e.1">
    <molecule id="U4PAZ9-4"/>
    <property type="protein sequence ID" value="F35B3.5e.1"/>
    <property type="gene ID" value="WBGene00004121"/>
</dbReference>
<dbReference type="GeneID" id="181743"/>
<dbReference type="KEGG" id="cel:CELE_F35B3.5"/>
<dbReference type="UCSC" id="F35B3.5a">
    <property type="organism name" value="c. elegans"/>
</dbReference>
<dbReference type="AGR" id="WB:WBGene00004121"/>
<dbReference type="CTD" id="181743"/>
<dbReference type="WormBase" id="F35B3.5a">
    <molecule id="U4PAZ9-2"/>
    <property type="protein sequence ID" value="CE48430"/>
    <property type="gene ID" value="WBGene00004121"/>
    <property type="gene designation" value="ptrn-1"/>
</dbReference>
<dbReference type="WormBase" id="F35B3.5c">
    <molecule id="U4PAZ9-1"/>
    <property type="protein sequence ID" value="CE48765"/>
    <property type="gene ID" value="WBGene00004121"/>
    <property type="gene designation" value="ptrn-1"/>
</dbReference>
<dbReference type="WormBase" id="F35B3.5d">
    <molecule id="U4PAZ9-3"/>
    <property type="protein sequence ID" value="CE48517"/>
    <property type="gene ID" value="WBGene00004121"/>
    <property type="gene designation" value="ptrn-1"/>
</dbReference>
<dbReference type="WormBase" id="F35B3.5e">
    <molecule id="U4PAZ9-4"/>
    <property type="protein sequence ID" value="CE49594"/>
    <property type="gene ID" value="WBGene00004121"/>
    <property type="gene designation" value="ptrn-1"/>
</dbReference>
<dbReference type="eggNOG" id="KOG3654">
    <property type="taxonomic scope" value="Eukaryota"/>
</dbReference>
<dbReference type="GeneTree" id="ENSGT00950000182975"/>
<dbReference type="HOGENOM" id="CLU_274207_0_0_1"/>
<dbReference type="InParanoid" id="U4PAZ9"/>
<dbReference type="OMA" id="LTNWGMT"/>
<dbReference type="OrthoDB" id="2125658at2759"/>
<dbReference type="PRO" id="PR:U4PAZ9"/>
<dbReference type="Proteomes" id="UP000001940">
    <property type="component" value="Chromosome X"/>
</dbReference>
<dbReference type="Bgee" id="WBGene00004121">
    <property type="expression patterns" value="Expressed in pharyngeal muscle cell (C elegans) and 3 other cell types or tissues"/>
</dbReference>
<dbReference type="GO" id="GO:0030424">
    <property type="term" value="C:axon"/>
    <property type="evidence" value="ECO:0007669"/>
    <property type="project" value="UniProtKB-SubCell"/>
</dbReference>
<dbReference type="GO" id="GO:0005829">
    <property type="term" value="C:cytosol"/>
    <property type="evidence" value="ECO:0007669"/>
    <property type="project" value="UniProtKB-SubCell"/>
</dbReference>
<dbReference type="GO" id="GO:0030425">
    <property type="term" value="C:dendrite"/>
    <property type="evidence" value="ECO:0007669"/>
    <property type="project" value="UniProtKB-SubCell"/>
</dbReference>
<dbReference type="GO" id="GO:0036449">
    <property type="term" value="C:microtubule minus-end"/>
    <property type="evidence" value="ECO:0000314"/>
    <property type="project" value="WormBase"/>
</dbReference>
<dbReference type="GO" id="GO:0043204">
    <property type="term" value="C:perikaryon"/>
    <property type="evidence" value="ECO:0007669"/>
    <property type="project" value="UniProtKB-SubCell"/>
</dbReference>
<dbReference type="GO" id="GO:0042383">
    <property type="term" value="C:sarcolemma"/>
    <property type="evidence" value="ECO:0007669"/>
    <property type="project" value="UniProtKB-SubCell"/>
</dbReference>
<dbReference type="GO" id="GO:0005516">
    <property type="term" value="F:calmodulin binding"/>
    <property type="evidence" value="ECO:0007669"/>
    <property type="project" value="InterPro"/>
</dbReference>
<dbReference type="GO" id="GO:0051011">
    <property type="term" value="F:microtubule minus-end binding"/>
    <property type="evidence" value="ECO:0000314"/>
    <property type="project" value="WormBase"/>
</dbReference>
<dbReference type="GO" id="GO:0031122">
    <property type="term" value="P:cytoplasmic microtubule organization"/>
    <property type="evidence" value="ECO:0000316"/>
    <property type="project" value="WormBase"/>
</dbReference>
<dbReference type="GO" id="GO:0007026">
    <property type="term" value="P:negative regulation of microtubule depolymerization"/>
    <property type="evidence" value="ECO:0000318"/>
    <property type="project" value="GO_Central"/>
</dbReference>
<dbReference type="GO" id="GO:0002119">
    <property type="term" value="P:nematode larval development"/>
    <property type="evidence" value="ECO:0000316"/>
    <property type="project" value="WormBase"/>
</dbReference>
<dbReference type="CDD" id="cd00014">
    <property type="entry name" value="CH_SF"/>
    <property type="match status" value="1"/>
</dbReference>
<dbReference type="FunFam" id="1.10.418.10:FF:000109">
    <property type="entry name" value="Patronin (microtubule-binding protein) homolog"/>
    <property type="match status" value="1"/>
</dbReference>
<dbReference type="Gene3D" id="1.10.418.10">
    <property type="entry name" value="Calponin-like domain"/>
    <property type="match status" value="1"/>
</dbReference>
<dbReference type="Gene3D" id="3.10.20.360">
    <property type="entry name" value="CKK domain"/>
    <property type="match status" value="1"/>
</dbReference>
<dbReference type="InterPro" id="IPR032940">
    <property type="entry name" value="CAMSAP"/>
</dbReference>
<dbReference type="InterPro" id="IPR022613">
    <property type="entry name" value="CAMSAP-like_CH_dom"/>
</dbReference>
<dbReference type="InterPro" id="IPR001715">
    <property type="entry name" value="CH_dom"/>
</dbReference>
<dbReference type="InterPro" id="IPR036872">
    <property type="entry name" value="CH_dom_sf"/>
</dbReference>
<dbReference type="InterPro" id="IPR038209">
    <property type="entry name" value="CKK_dom_sf"/>
</dbReference>
<dbReference type="InterPro" id="IPR014797">
    <property type="entry name" value="CKK_domain"/>
</dbReference>
<dbReference type="InterPro" id="IPR011033">
    <property type="entry name" value="PRC_barrel-like_sf"/>
</dbReference>
<dbReference type="PANTHER" id="PTHR21595">
    <property type="entry name" value="PATRONIN"/>
    <property type="match status" value="1"/>
</dbReference>
<dbReference type="PANTHER" id="PTHR21595:SF0">
    <property type="entry name" value="PATRONIN"/>
    <property type="match status" value="1"/>
</dbReference>
<dbReference type="Pfam" id="PF11971">
    <property type="entry name" value="CAMSAP_CH"/>
    <property type="match status" value="1"/>
</dbReference>
<dbReference type="Pfam" id="PF08683">
    <property type="entry name" value="CAMSAP_CKK"/>
    <property type="match status" value="1"/>
</dbReference>
<dbReference type="SMART" id="SM01051">
    <property type="entry name" value="CAMSAP_CKK"/>
    <property type="match status" value="1"/>
</dbReference>
<dbReference type="SUPFAM" id="SSF47576">
    <property type="entry name" value="Calponin-homology domain, CH-domain"/>
    <property type="match status" value="1"/>
</dbReference>
<dbReference type="SUPFAM" id="SSF50346">
    <property type="entry name" value="PRC-barrel domain"/>
    <property type="match status" value="1"/>
</dbReference>
<dbReference type="PROSITE" id="PS50021">
    <property type="entry name" value="CH"/>
    <property type="match status" value="1"/>
</dbReference>
<dbReference type="PROSITE" id="PS51508">
    <property type="entry name" value="CKK"/>
    <property type="match status" value="1"/>
</dbReference>
<comment type="function">
    <text evidence="5 6 7 8 9">Required for microtubule stability and anchorage by binding to the minus ends of microtubules (PubMed:25437544, PubMed:26371552, PubMed:27661253). Acts redundantly with noca-1 to control circumferential microtubule assembly along the body which is necessary for larval development, viability, morphology and integrity of the epidermis (PubMed:26371552). Promotes microtubule stability and polymerization in neurons (PubMed:24569477). Involved in the maintenance of neurite morphology in ALM and PLM neurons (PubMed:24569477, PubMed:24569480, PubMed:25437544). May play a role in synaptic protein localization in the PLM neuron (PubMed:24569477). May act upstream of dlk-1 in neuronal regeneration (PubMed:24569480, PubMed:25437544). Plays a role in postembryonic epidermal tissue integrity and wound healing (PubMed:27661253).</text>
</comment>
<comment type="subunit">
    <text evidence="9">Interacts with dapk-1.</text>
</comment>
<comment type="subcellular location">
    <subcellularLocation>
        <location evidence="5 7">Cell projection</location>
        <location evidence="5 7">Axon</location>
    </subcellularLocation>
    <subcellularLocation>
        <location evidence="5 6 7">Cell projection</location>
        <location evidence="5 6 7">Dendrite</location>
    </subcellularLocation>
    <subcellularLocation>
        <location evidence="5">Cell membrane</location>
        <location evidence="5">Sarcolemma</location>
    </subcellularLocation>
    <subcellularLocation>
        <location evidence="5 9">Cytoplasm</location>
        <location evidence="5 9">Cytosol</location>
    </subcellularLocation>
    <subcellularLocation>
        <location evidence="5 9">Cytoplasm</location>
        <location evidence="5 9">Cytoskeleton</location>
    </subcellularLocation>
    <subcellularLocation>
        <location evidence="6">Perikaryon</location>
    </subcellularLocation>
    <text evidence="5 6 7 9">Localizes to puncta throughout the dendrites and axon of neurites, within the cytosol of muscle cells and at the sarcolemma (PubMed:24569477). Expressed in puncta along the dendrites of neurons and in the perikaryon (PubMed:24569480, PubMed:25437544). Localizes along microtubules (PubMed:27661253).</text>
</comment>
<comment type="alternative products">
    <event type="alternative splicing"/>
    <isoform>
        <id>U4PAZ9-1</id>
        <name evidence="14">c</name>
        <sequence type="displayed"/>
    </isoform>
    <isoform>
        <id>U4PAZ9-2</id>
        <name evidence="13">a</name>
        <sequence type="described" ref="VSP_058273"/>
    </isoform>
    <isoform>
        <id>U4PAZ9-3</id>
        <name evidence="15">d</name>
        <sequence type="described" ref="VSP_058271"/>
    </isoform>
    <isoform>
        <id>U4PAZ9-4</id>
        <name evidence="16">e</name>
        <sequence type="described" ref="VSP_058272"/>
    </isoform>
</comment>
<comment type="tissue specificity">
    <text evidence="5 6 8">Expressed in larval and adult epidermis, intestine and pharynx (PubMed:26371552). Broadly expressed in the nervous system (PubMed:24569480, PubMed:26371552). Expressed in body wall muscle cells (PubMed:24569477).</text>
</comment>
<comment type="developmental stage">
    <text evidence="5 8">Expressed throughout development (PubMed:24569477). Expressed in stretches and puncta in the body syncytium and in puncta within seam cells (PubMed:26371552).</text>
</comment>
<comment type="domain">
    <text evidence="3 9">The CKK domain binds microtubules. Might be required for microtubule stabilization (PubMed:27661253).</text>
</comment>
<comment type="domain">
    <text evidence="9">The Calponin-homology (CH) domain might negatively regulate the CKK domain.</text>
</comment>
<comment type="domain">
    <text evidence="9">The coiled-coil domain contributes to microtubule binding and might negatively regulate the CKK domain.</text>
</comment>
<comment type="disruption phenotype">
    <text evidence="5 6 7 8 9">Viable with no gross morphological defects, but exhibit uncoordinated locomotion and body positioning (PubMed:24569477, PubMed:24569480, PubMed:26371552). Small reduction in the density of microtubule bundles along the length of the body (PubMed:25437544, PubMed:26371552). Fewer microtubules in the axons of PLM and ALM neurons (PubMed:24569477, PubMed:25437544). Defective touch neuron morphology with ectopic neurites extending from the cell bodies of ALM neurons (PubMed:25437544). Irregular PLM neuron morphology including defective PLM neuron commissure extension, loss of collateral branches, presynaptic varicosities, overextended neurites and abnormal synapse localization as identified by lack of small GTPase rab-3 and snb-1 at synaptic patches (PubMed:24569477, PubMed:24569480). Impaired PLM neuron regeneration following severing of the PLM axon (PubMed:25437544). Loss of circumferential microtubule bundles and shortening of remaining bundles (PubMed:27661253). Increased microtubule growth rates (PubMed:27661253). Delayed wound closure (PubMed:27661253). Treatment with a microtubule stabilizing drug, paclitaxel, results in epidermal morphology defects (PubMed:27661253). Treatment with a microtubule destabilizing drug, colchicine, results in loss of light touch sensitivity and ectopic sprouting from neuronal axons (PubMed:24569477). Double knockout with noca-1 isoforms results in severe developmental defects with 60% not surviving beyond early postembryonic stages, mainly dying at the larval developmental stage L4, and slow growth with surviving mutants being smaller in size and uncoordinated (PubMed:26371552). Double mutants also have significantly fewer microtubule bundles along the length of the body, broken or branched seam cell syncytia that is disconnected from the head and the cuticles have increased permeability (PubMed:26371552). In a dapk-1 mutant background, suppression of the epidermal morphology defects (PubMed:27661253).</text>
</comment>
<comment type="similarity">
    <text evidence="3">Belongs to the CAMSAP1 family.</text>
</comment>
<organism evidence="12">
    <name type="scientific">Caenorhabditis elegans</name>
    <dbReference type="NCBI Taxonomy" id="6239"/>
    <lineage>
        <taxon>Eukaryota</taxon>
        <taxon>Metazoa</taxon>
        <taxon>Ecdysozoa</taxon>
        <taxon>Nematoda</taxon>
        <taxon>Chromadorea</taxon>
        <taxon>Rhabditida</taxon>
        <taxon>Rhabditina</taxon>
        <taxon>Rhabditomorpha</taxon>
        <taxon>Rhabditoidea</taxon>
        <taxon>Rhabditidae</taxon>
        <taxon>Peloderinae</taxon>
        <taxon>Caenorhabditis</taxon>
    </lineage>
</organism>
<feature type="chain" id="PRO_0000436173" description="Patronin (microtubule-binding protein) homolog" evidence="10">
    <location>
        <begin position="1"/>
        <end position="1112"/>
    </location>
</feature>
<feature type="domain" description="Calponin-homology (CH)" evidence="2">
    <location>
        <begin position="165"/>
        <end position="286"/>
    </location>
</feature>
<feature type="domain" description="CKK" evidence="3">
    <location>
        <begin position="972"/>
        <end position="1109"/>
    </location>
</feature>
<feature type="region of interest" description="Disordered" evidence="4">
    <location>
        <begin position="324"/>
        <end position="358"/>
    </location>
</feature>
<feature type="region of interest" description="Disordered" evidence="4">
    <location>
        <begin position="485"/>
        <end position="504"/>
    </location>
</feature>
<feature type="region of interest" description="Disordered" evidence="4">
    <location>
        <begin position="542"/>
        <end position="566"/>
    </location>
</feature>
<feature type="region of interest" description="Disordered" evidence="4">
    <location>
        <begin position="788"/>
        <end position="834"/>
    </location>
</feature>
<feature type="region of interest" description="Disordered" evidence="4">
    <location>
        <begin position="916"/>
        <end position="965"/>
    </location>
</feature>
<feature type="coiled-coil region" evidence="1">
    <location>
        <begin position="850"/>
        <end position="914"/>
    </location>
</feature>
<feature type="compositionally biased region" description="Polar residues" evidence="4">
    <location>
        <begin position="345"/>
        <end position="358"/>
    </location>
</feature>
<feature type="compositionally biased region" description="Polar residues" evidence="4">
    <location>
        <begin position="489"/>
        <end position="504"/>
    </location>
</feature>
<feature type="compositionally biased region" description="Low complexity" evidence="4">
    <location>
        <begin position="542"/>
        <end position="557"/>
    </location>
</feature>
<feature type="compositionally biased region" description="Basic and acidic residues" evidence="4">
    <location>
        <begin position="802"/>
        <end position="816"/>
    </location>
</feature>
<feature type="compositionally biased region" description="Polar residues" evidence="4">
    <location>
        <begin position="935"/>
        <end position="951"/>
    </location>
</feature>
<feature type="compositionally biased region" description="Low complexity" evidence="4">
    <location>
        <begin position="956"/>
        <end position="965"/>
    </location>
</feature>
<feature type="splice variant" id="VSP_058271" description="In isoform d." evidence="10">
    <location>
        <begin position="1"/>
        <end position="726"/>
    </location>
</feature>
<feature type="splice variant" id="VSP_058272" description="In isoform e." evidence="10">
    <location>
        <begin position="1"/>
        <end position="515"/>
    </location>
</feature>
<feature type="splice variant" id="VSP_058273" description="In isoform a." evidence="10">
    <location>
        <begin position="431"/>
        <end position="432"/>
    </location>
</feature>
<gene>
    <name evidence="14" type="primary">ptrn-1</name>
    <name evidence="14" type="ORF">F35B3.5</name>
</gene>